<proteinExistence type="inferred from homology"/>
<name>RSMH_BURO0</name>
<evidence type="ECO:0000255" key="1">
    <source>
        <dbReference type="HAMAP-Rule" id="MF_01007"/>
    </source>
</evidence>
<gene>
    <name evidence="1" type="primary">rsmH</name>
    <name type="synonym">mraW</name>
    <name type="ordered locus">Bcenmc03_0522</name>
</gene>
<reference key="1">
    <citation type="submission" date="2008-02" db="EMBL/GenBank/DDBJ databases">
        <title>Complete sequence of chromosome 1 of Burkholderia cenocepacia MC0-3.</title>
        <authorList>
            <person name="Copeland A."/>
            <person name="Lucas S."/>
            <person name="Lapidus A."/>
            <person name="Barry K."/>
            <person name="Bruce D."/>
            <person name="Goodwin L."/>
            <person name="Glavina del Rio T."/>
            <person name="Dalin E."/>
            <person name="Tice H."/>
            <person name="Pitluck S."/>
            <person name="Chain P."/>
            <person name="Malfatti S."/>
            <person name="Shin M."/>
            <person name="Vergez L."/>
            <person name="Schmutz J."/>
            <person name="Larimer F."/>
            <person name="Land M."/>
            <person name="Hauser L."/>
            <person name="Kyrpides N."/>
            <person name="Mikhailova N."/>
            <person name="Tiedje J."/>
            <person name="Richardson P."/>
        </authorList>
    </citation>
    <scope>NUCLEOTIDE SEQUENCE [LARGE SCALE GENOMIC DNA]</scope>
    <source>
        <strain>MC0-3</strain>
    </source>
</reference>
<organism>
    <name type="scientific">Burkholderia orbicola (strain MC0-3)</name>
    <dbReference type="NCBI Taxonomy" id="406425"/>
    <lineage>
        <taxon>Bacteria</taxon>
        <taxon>Pseudomonadati</taxon>
        <taxon>Pseudomonadota</taxon>
        <taxon>Betaproteobacteria</taxon>
        <taxon>Burkholderiales</taxon>
        <taxon>Burkholderiaceae</taxon>
        <taxon>Burkholderia</taxon>
        <taxon>Burkholderia cepacia complex</taxon>
        <taxon>Burkholderia orbicola</taxon>
    </lineage>
</organism>
<feature type="chain" id="PRO_0000386770" description="Ribosomal RNA small subunit methyltransferase H">
    <location>
        <begin position="1"/>
        <end position="313"/>
    </location>
</feature>
<feature type="binding site" evidence="1">
    <location>
        <begin position="35"/>
        <end position="37"/>
    </location>
    <ligand>
        <name>S-adenosyl-L-methionine</name>
        <dbReference type="ChEBI" id="CHEBI:59789"/>
    </ligand>
</feature>
<feature type="binding site" evidence="1">
    <location>
        <position position="55"/>
    </location>
    <ligand>
        <name>S-adenosyl-L-methionine</name>
        <dbReference type="ChEBI" id="CHEBI:59789"/>
    </ligand>
</feature>
<feature type="binding site" evidence="1">
    <location>
        <position position="79"/>
    </location>
    <ligand>
        <name>S-adenosyl-L-methionine</name>
        <dbReference type="ChEBI" id="CHEBI:59789"/>
    </ligand>
</feature>
<feature type="binding site" evidence="1">
    <location>
        <position position="100"/>
    </location>
    <ligand>
        <name>S-adenosyl-L-methionine</name>
        <dbReference type="ChEBI" id="CHEBI:59789"/>
    </ligand>
</feature>
<feature type="binding site" evidence="1">
    <location>
        <position position="107"/>
    </location>
    <ligand>
        <name>S-adenosyl-L-methionine</name>
        <dbReference type="ChEBI" id="CHEBI:59789"/>
    </ligand>
</feature>
<sequence length="313" mass="34208">MGNELRHRTVLLDEAVESLVTRPDGVYVDGTFGRGGHSRAVLARLASAGRLIAFDKDPRAIETAQGIEDARFSIVHDSFASMRDALAARGVEKVSGVLLDLGVSSPQVDDPARGFSFRADGPLDMRMDPTRGESAAEWLARASVQELTEVIRDYGEERFAFQIAKALVARRAESDRLGPLDTTGELAQIVGHVVKTREKGKDPATRTFQAIRIHVNQELADLQVVLDAALSLLEQGGRLVVISFHSLEDRIVKRFMQAHASAPAVDRRLPIRAVDLPSPPLKIISRQFPSEAEVAANPRARSAVMRIAERVTP</sequence>
<accession>B1JUW4</accession>
<comment type="function">
    <text evidence="1">Specifically methylates the N4 position of cytidine in position 1402 (C1402) of 16S rRNA.</text>
</comment>
<comment type="catalytic activity">
    <reaction evidence="1">
        <text>cytidine(1402) in 16S rRNA + S-adenosyl-L-methionine = N(4)-methylcytidine(1402) in 16S rRNA + S-adenosyl-L-homocysteine + H(+)</text>
        <dbReference type="Rhea" id="RHEA:42928"/>
        <dbReference type="Rhea" id="RHEA-COMP:10286"/>
        <dbReference type="Rhea" id="RHEA-COMP:10287"/>
        <dbReference type="ChEBI" id="CHEBI:15378"/>
        <dbReference type="ChEBI" id="CHEBI:57856"/>
        <dbReference type="ChEBI" id="CHEBI:59789"/>
        <dbReference type="ChEBI" id="CHEBI:74506"/>
        <dbReference type="ChEBI" id="CHEBI:82748"/>
        <dbReference type="EC" id="2.1.1.199"/>
    </reaction>
</comment>
<comment type="subcellular location">
    <subcellularLocation>
        <location evidence="1">Cytoplasm</location>
    </subcellularLocation>
</comment>
<comment type="similarity">
    <text evidence="1">Belongs to the methyltransferase superfamily. RsmH family.</text>
</comment>
<dbReference type="EC" id="2.1.1.199" evidence="1"/>
<dbReference type="EMBL" id="CP000958">
    <property type="protein sequence ID" value="ACA89700.1"/>
    <property type="molecule type" value="Genomic_DNA"/>
</dbReference>
<dbReference type="RefSeq" id="WP_011694135.1">
    <property type="nucleotide sequence ID" value="NC_010508.1"/>
</dbReference>
<dbReference type="SMR" id="B1JUW4"/>
<dbReference type="GeneID" id="83047323"/>
<dbReference type="KEGG" id="bcm:Bcenmc03_0522"/>
<dbReference type="HOGENOM" id="CLU_038422_2_0_4"/>
<dbReference type="Proteomes" id="UP000002169">
    <property type="component" value="Chromosome 1"/>
</dbReference>
<dbReference type="GO" id="GO:0005737">
    <property type="term" value="C:cytoplasm"/>
    <property type="evidence" value="ECO:0007669"/>
    <property type="project" value="UniProtKB-SubCell"/>
</dbReference>
<dbReference type="GO" id="GO:0071424">
    <property type="term" value="F:rRNA (cytosine-N4-)-methyltransferase activity"/>
    <property type="evidence" value="ECO:0007669"/>
    <property type="project" value="UniProtKB-UniRule"/>
</dbReference>
<dbReference type="GO" id="GO:0070475">
    <property type="term" value="P:rRNA base methylation"/>
    <property type="evidence" value="ECO:0007669"/>
    <property type="project" value="UniProtKB-UniRule"/>
</dbReference>
<dbReference type="Gene3D" id="1.10.150.170">
    <property type="entry name" value="Putative methyltransferase TM0872, insert domain"/>
    <property type="match status" value="1"/>
</dbReference>
<dbReference type="Gene3D" id="3.40.50.150">
    <property type="entry name" value="Vaccinia Virus protein VP39"/>
    <property type="match status" value="1"/>
</dbReference>
<dbReference type="HAMAP" id="MF_01007">
    <property type="entry name" value="16SrRNA_methyltr_H"/>
    <property type="match status" value="1"/>
</dbReference>
<dbReference type="InterPro" id="IPR002903">
    <property type="entry name" value="RsmH"/>
</dbReference>
<dbReference type="InterPro" id="IPR023397">
    <property type="entry name" value="SAM-dep_MeTrfase_MraW_recog"/>
</dbReference>
<dbReference type="InterPro" id="IPR029063">
    <property type="entry name" value="SAM-dependent_MTases_sf"/>
</dbReference>
<dbReference type="NCBIfam" id="TIGR00006">
    <property type="entry name" value="16S rRNA (cytosine(1402)-N(4))-methyltransferase RsmH"/>
    <property type="match status" value="1"/>
</dbReference>
<dbReference type="PANTHER" id="PTHR11265:SF0">
    <property type="entry name" value="12S RRNA N4-METHYLCYTIDINE METHYLTRANSFERASE"/>
    <property type="match status" value="1"/>
</dbReference>
<dbReference type="PANTHER" id="PTHR11265">
    <property type="entry name" value="S-ADENOSYL-METHYLTRANSFERASE MRAW"/>
    <property type="match status" value="1"/>
</dbReference>
<dbReference type="Pfam" id="PF01795">
    <property type="entry name" value="Methyltransf_5"/>
    <property type="match status" value="1"/>
</dbReference>
<dbReference type="PIRSF" id="PIRSF004486">
    <property type="entry name" value="MraW"/>
    <property type="match status" value="1"/>
</dbReference>
<dbReference type="SUPFAM" id="SSF81799">
    <property type="entry name" value="Putative methyltransferase TM0872, insert domain"/>
    <property type="match status" value="1"/>
</dbReference>
<dbReference type="SUPFAM" id="SSF53335">
    <property type="entry name" value="S-adenosyl-L-methionine-dependent methyltransferases"/>
    <property type="match status" value="1"/>
</dbReference>
<protein>
    <recommendedName>
        <fullName evidence="1">Ribosomal RNA small subunit methyltransferase H</fullName>
        <ecNumber evidence="1">2.1.1.199</ecNumber>
    </recommendedName>
    <alternativeName>
        <fullName evidence="1">16S rRNA m(4)C1402 methyltransferase</fullName>
    </alternativeName>
    <alternativeName>
        <fullName evidence="1">rRNA (cytosine-N(4)-)-methyltransferase RsmH</fullName>
    </alternativeName>
</protein>
<keyword id="KW-0963">Cytoplasm</keyword>
<keyword id="KW-0489">Methyltransferase</keyword>
<keyword id="KW-0698">rRNA processing</keyword>
<keyword id="KW-0949">S-adenosyl-L-methionine</keyword>
<keyword id="KW-0808">Transferase</keyword>